<gene>
    <name type="primary">alr</name>
    <name type="ordered locus">Veis_4337</name>
</gene>
<feature type="chain" id="PRO_1000066060" description="Alanine racemase">
    <location>
        <begin position="1"/>
        <end position="371"/>
    </location>
</feature>
<feature type="active site" description="Proton acceptor; specific for D-alanine" evidence="1">
    <location>
        <position position="35"/>
    </location>
</feature>
<feature type="active site" description="Proton acceptor; specific for L-alanine" evidence="1">
    <location>
        <position position="256"/>
    </location>
</feature>
<feature type="binding site" evidence="1">
    <location>
        <position position="130"/>
    </location>
    <ligand>
        <name>substrate</name>
    </ligand>
</feature>
<feature type="binding site" evidence="1">
    <location>
        <position position="304"/>
    </location>
    <ligand>
        <name>substrate</name>
    </ligand>
</feature>
<feature type="modified residue" description="N6-(pyridoxal phosphate)lysine" evidence="1">
    <location>
        <position position="35"/>
    </location>
</feature>
<organism>
    <name type="scientific">Verminephrobacter eiseniae (strain EF01-2)</name>
    <dbReference type="NCBI Taxonomy" id="391735"/>
    <lineage>
        <taxon>Bacteria</taxon>
        <taxon>Pseudomonadati</taxon>
        <taxon>Pseudomonadota</taxon>
        <taxon>Betaproteobacteria</taxon>
        <taxon>Burkholderiales</taxon>
        <taxon>Comamonadaceae</taxon>
        <taxon>Verminephrobacter</taxon>
    </lineage>
</organism>
<name>ALR_VEREI</name>
<protein>
    <recommendedName>
        <fullName evidence="1">Alanine racemase</fullName>
        <ecNumber evidence="1">5.1.1.1</ecNumber>
    </recommendedName>
</protein>
<accession>A1WQY3</accession>
<evidence type="ECO:0000255" key="1">
    <source>
        <dbReference type="HAMAP-Rule" id="MF_01201"/>
    </source>
</evidence>
<dbReference type="EC" id="5.1.1.1" evidence="1"/>
<dbReference type="EMBL" id="CP000542">
    <property type="protein sequence ID" value="ABM60040.1"/>
    <property type="molecule type" value="Genomic_DNA"/>
</dbReference>
<dbReference type="RefSeq" id="WP_011812026.1">
    <property type="nucleotide sequence ID" value="NC_008786.1"/>
</dbReference>
<dbReference type="SMR" id="A1WQY3"/>
<dbReference type="STRING" id="391735.Veis_4337"/>
<dbReference type="GeneID" id="76462655"/>
<dbReference type="KEGG" id="vei:Veis_4337"/>
<dbReference type="eggNOG" id="COG0787">
    <property type="taxonomic scope" value="Bacteria"/>
</dbReference>
<dbReference type="HOGENOM" id="CLU_028393_1_0_4"/>
<dbReference type="OrthoDB" id="9813814at2"/>
<dbReference type="UniPathway" id="UPA00042">
    <property type="reaction ID" value="UER00497"/>
</dbReference>
<dbReference type="Proteomes" id="UP000000374">
    <property type="component" value="Chromosome"/>
</dbReference>
<dbReference type="GO" id="GO:0005829">
    <property type="term" value="C:cytosol"/>
    <property type="evidence" value="ECO:0007669"/>
    <property type="project" value="TreeGrafter"/>
</dbReference>
<dbReference type="GO" id="GO:0008784">
    <property type="term" value="F:alanine racemase activity"/>
    <property type="evidence" value="ECO:0007669"/>
    <property type="project" value="UniProtKB-UniRule"/>
</dbReference>
<dbReference type="GO" id="GO:0030170">
    <property type="term" value="F:pyridoxal phosphate binding"/>
    <property type="evidence" value="ECO:0007669"/>
    <property type="project" value="UniProtKB-UniRule"/>
</dbReference>
<dbReference type="GO" id="GO:0030632">
    <property type="term" value="P:D-alanine biosynthetic process"/>
    <property type="evidence" value="ECO:0007669"/>
    <property type="project" value="UniProtKB-UniRule"/>
</dbReference>
<dbReference type="CDD" id="cd06827">
    <property type="entry name" value="PLPDE_III_AR_proteobact"/>
    <property type="match status" value="1"/>
</dbReference>
<dbReference type="FunFam" id="3.20.20.10:FF:000002">
    <property type="entry name" value="Alanine racemase"/>
    <property type="match status" value="1"/>
</dbReference>
<dbReference type="Gene3D" id="3.20.20.10">
    <property type="entry name" value="Alanine racemase"/>
    <property type="match status" value="1"/>
</dbReference>
<dbReference type="Gene3D" id="2.40.37.10">
    <property type="entry name" value="Lyase, Ornithine Decarboxylase, Chain A, domain 1"/>
    <property type="match status" value="1"/>
</dbReference>
<dbReference type="HAMAP" id="MF_01201">
    <property type="entry name" value="Ala_racemase"/>
    <property type="match status" value="1"/>
</dbReference>
<dbReference type="InterPro" id="IPR000821">
    <property type="entry name" value="Ala_racemase"/>
</dbReference>
<dbReference type="InterPro" id="IPR009006">
    <property type="entry name" value="Ala_racemase/Decarboxylase_C"/>
</dbReference>
<dbReference type="InterPro" id="IPR011079">
    <property type="entry name" value="Ala_racemase_C"/>
</dbReference>
<dbReference type="InterPro" id="IPR001608">
    <property type="entry name" value="Ala_racemase_N"/>
</dbReference>
<dbReference type="InterPro" id="IPR020622">
    <property type="entry name" value="Ala_racemase_pyridoxalP-BS"/>
</dbReference>
<dbReference type="InterPro" id="IPR029066">
    <property type="entry name" value="PLP-binding_barrel"/>
</dbReference>
<dbReference type="NCBIfam" id="TIGR00492">
    <property type="entry name" value="alr"/>
    <property type="match status" value="1"/>
</dbReference>
<dbReference type="PANTHER" id="PTHR30511">
    <property type="entry name" value="ALANINE RACEMASE"/>
    <property type="match status" value="1"/>
</dbReference>
<dbReference type="PANTHER" id="PTHR30511:SF0">
    <property type="entry name" value="ALANINE RACEMASE, CATABOLIC-RELATED"/>
    <property type="match status" value="1"/>
</dbReference>
<dbReference type="Pfam" id="PF00842">
    <property type="entry name" value="Ala_racemase_C"/>
    <property type="match status" value="1"/>
</dbReference>
<dbReference type="Pfam" id="PF01168">
    <property type="entry name" value="Ala_racemase_N"/>
    <property type="match status" value="1"/>
</dbReference>
<dbReference type="PRINTS" id="PR00992">
    <property type="entry name" value="ALARACEMASE"/>
</dbReference>
<dbReference type="SMART" id="SM01005">
    <property type="entry name" value="Ala_racemase_C"/>
    <property type="match status" value="1"/>
</dbReference>
<dbReference type="SUPFAM" id="SSF50621">
    <property type="entry name" value="Alanine racemase C-terminal domain-like"/>
    <property type="match status" value="1"/>
</dbReference>
<dbReference type="SUPFAM" id="SSF51419">
    <property type="entry name" value="PLP-binding barrel"/>
    <property type="match status" value="1"/>
</dbReference>
<dbReference type="PROSITE" id="PS00395">
    <property type="entry name" value="ALANINE_RACEMASE"/>
    <property type="match status" value="1"/>
</dbReference>
<sequence length="371" mass="39439">MPRPIQARIHSSALQANLRRVRQSVPDAKVWAVVKANAYGHGIARVFESLRGADGFALLDLAEAQGLRGLGWRGPILLLEGVFEPRDLELCSRLGLWHVVHCDEQIDMLAAHRSQAPQHVFLKLNAGMNRLGFAPQRYRSAWARLGALAQVDEISLMAHFSDADGPRGIAPQLAAFVRATQDLPGARSLCNSAATLRHAADASVRADWVRAGIVLYGSAPDFPGHDAGHWGLQPAMTLATRLIGVQQLQAGDTVGYGARFVAPGPMAIGVAACGYADGYPLHCGTGTPVLVDGIRTRVVGRVSMDMLTVDLTPLQRAGLQPGFGSEVTLWGRASSGAVLSIDEVAQAGGTLGYELMCALAQRVPVTLDGRA</sequence>
<proteinExistence type="inferred from homology"/>
<keyword id="KW-0413">Isomerase</keyword>
<keyword id="KW-0663">Pyridoxal phosphate</keyword>
<keyword id="KW-1185">Reference proteome</keyword>
<reference key="1">
    <citation type="submission" date="2006-12" db="EMBL/GenBank/DDBJ databases">
        <title>Complete sequence of chromosome 1 of Verminephrobacter eiseniae EF01-2.</title>
        <authorList>
            <person name="Copeland A."/>
            <person name="Lucas S."/>
            <person name="Lapidus A."/>
            <person name="Barry K."/>
            <person name="Detter J.C."/>
            <person name="Glavina del Rio T."/>
            <person name="Dalin E."/>
            <person name="Tice H."/>
            <person name="Pitluck S."/>
            <person name="Chertkov O."/>
            <person name="Brettin T."/>
            <person name="Bruce D."/>
            <person name="Han C."/>
            <person name="Tapia R."/>
            <person name="Gilna P."/>
            <person name="Schmutz J."/>
            <person name="Larimer F."/>
            <person name="Land M."/>
            <person name="Hauser L."/>
            <person name="Kyrpides N."/>
            <person name="Kim E."/>
            <person name="Stahl D."/>
            <person name="Richardson P."/>
        </authorList>
    </citation>
    <scope>NUCLEOTIDE SEQUENCE [LARGE SCALE GENOMIC DNA]</scope>
    <source>
        <strain>EF01-2</strain>
    </source>
</reference>
<comment type="function">
    <text evidence="1">Catalyzes the interconversion of L-alanine and D-alanine. May also act on other amino acids.</text>
</comment>
<comment type="catalytic activity">
    <reaction evidence="1">
        <text>L-alanine = D-alanine</text>
        <dbReference type="Rhea" id="RHEA:20249"/>
        <dbReference type="ChEBI" id="CHEBI:57416"/>
        <dbReference type="ChEBI" id="CHEBI:57972"/>
        <dbReference type="EC" id="5.1.1.1"/>
    </reaction>
</comment>
<comment type="cofactor">
    <cofactor evidence="1">
        <name>pyridoxal 5'-phosphate</name>
        <dbReference type="ChEBI" id="CHEBI:597326"/>
    </cofactor>
</comment>
<comment type="pathway">
    <text evidence="1">Amino-acid biosynthesis; D-alanine biosynthesis; D-alanine from L-alanine: step 1/1.</text>
</comment>
<comment type="similarity">
    <text evidence="1">Belongs to the alanine racemase family.</text>
</comment>